<sequence>MNKIINNVFAREILDSRGYPTIEVEIELCDGAIGRASVPSGASTGKLEALELRDQDEKRYCGKGVLKAVQAVNGIIADEIIGMNAADQNAIDKALIELDGTKNKSKLGANATLGVSLAVAKAAANSFKMPLYRYLGGKQTSVMPVPLINIINGGVHADNKLDFQEFMILPVGAETFSEAIRISAEVFHNLRSILKKKGYSTNVGDEGGFAPNIESTEEALDLIIYAIESAGYSAQSDFALGLDVASSTFYEDGIYEFESKGLTSEELTEYYCNLVERYPIISIEDAMSEDDYEGWKLLTAKLGNKIQLVGDDLFVTNCELICKGIEEKMANAVLIKPNQIGTLTETFAAIEMAKSNGYKAVVSHRSGETEDTTISHIAVASNCGQIKTGSLSRSDRLAKYNELMRIESTLGKDAKYYRGLAWVL</sequence>
<protein>
    <recommendedName>
        <fullName evidence="1">Enolase</fullName>
        <ecNumber evidence="1">4.2.1.11</ecNumber>
    </recommendedName>
    <alternativeName>
        <fullName evidence="1">2-phospho-D-glycerate hydro-lyase</fullName>
    </alternativeName>
    <alternativeName>
        <fullName evidence="1">2-phosphoglycerate dehydratase</fullName>
    </alternativeName>
</protein>
<gene>
    <name evidence="1" type="primary">eno</name>
    <name type="ordered locus">WRi_002510</name>
</gene>
<accession>C0R5N4</accession>
<keyword id="KW-0963">Cytoplasm</keyword>
<keyword id="KW-0324">Glycolysis</keyword>
<keyword id="KW-0456">Lyase</keyword>
<keyword id="KW-0460">Magnesium</keyword>
<keyword id="KW-0479">Metal-binding</keyword>
<keyword id="KW-0964">Secreted</keyword>
<feature type="chain" id="PRO_1000133031" description="Enolase">
    <location>
        <begin position="1"/>
        <end position="424"/>
    </location>
</feature>
<feature type="active site" description="Proton donor" evidence="1">
    <location>
        <position position="206"/>
    </location>
</feature>
<feature type="active site" description="Proton acceptor" evidence="1">
    <location>
        <position position="336"/>
    </location>
</feature>
<feature type="binding site" evidence="1">
    <location>
        <position position="164"/>
    </location>
    <ligand>
        <name>(2R)-2-phosphoglycerate</name>
        <dbReference type="ChEBI" id="CHEBI:58289"/>
    </ligand>
</feature>
<feature type="binding site" evidence="1">
    <location>
        <position position="243"/>
    </location>
    <ligand>
        <name>Mg(2+)</name>
        <dbReference type="ChEBI" id="CHEBI:18420"/>
    </ligand>
</feature>
<feature type="binding site" evidence="1">
    <location>
        <position position="284"/>
    </location>
    <ligand>
        <name>Mg(2+)</name>
        <dbReference type="ChEBI" id="CHEBI:18420"/>
    </ligand>
</feature>
<feature type="binding site" evidence="1">
    <location>
        <position position="311"/>
    </location>
    <ligand>
        <name>Mg(2+)</name>
        <dbReference type="ChEBI" id="CHEBI:18420"/>
    </ligand>
</feature>
<feature type="binding site" evidence="1">
    <location>
        <position position="336"/>
    </location>
    <ligand>
        <name>(2R)-2-phosphoglycerate</name>
        <dbReference type="ChEBI" id="CHEBI:58289"/>
    </ligand>
</feature>
<feature type="binding site" evidence="1">
    <location>
        <position position="365"/>
    </location>
    <ligand>
        <name>(2R)-2-phosphoglycerate</name>
        <dbReference type="ChEBI" id="CHEBI:58289"/>
    </ligand>
</feature>
<feature type="binding site" evidence="1">
    <location>
        <position position="366"/>
    </location>
    <ligand>
        <name>(2R)-2-phosphoglycerate</name>
        <dbReference type="ChEBI" id="CHEBI:58289"/>
    </ligand>
</feature>
<feature type="binding site" evidence="1">
    <location>
        <position position="387"/>
    </location>
    <ligand>
        <name>(2R)-2-phosphoglycerate</name>
        <dbReference type="ChEBI" id="CHEBI:58289"/>
    </ligand>
</feature>
<evidence type="ECO:0000255" key="1">
    <source>
        <dbReference type="HAMAP-Rule" id="MF_00318"/>
    </source>
</evidence>
<name>ENO_WOLWR</name>
<organism>
    <name type="scientific">Wolbachia sp. subsp. Drosophila simulans (strain wRi)</name>
    <dbReference type="NCBI Taxonomy" id="66084"/>
    <lineage>
        <taxon>Bacteria</taxon>
        <taxon>Pseudomonadati</taxon>
        <taxon>Pseudomonadota</taxon>
        <taxon>Alphaproteobacteria</taxon>
        <taxon>Rickettsiales</taxon>
        <taxon>Anaplasmataceae</taxon>
        <taxon>Wolbachieae</taxon>
        <taxon>Wolbachia</taxon>
    </lineage>
</organism>
<reference key="1">
    <citation type="journal article" date="2009" name="Proc. Natl. Acad. Sci. U.S.A.">
        <title>The mosaic genome structure of the Wolbachia wRi strain infecting Drosophila simulans.</title>
        <authorList>
            <person name="Klasson L."/>
            <person name="Westberg J."/>
            <person name="Sapountzis P."/>
            <person name="Naeslund K."/>
            <person name="Lutnaes Y."/>
            <person name="Darby A.C."/>
            <person name="Veneti Z."/>
            <person name="Chen L."/>
            <person name="Braig H.R."/>
            <person name="Garrett R."/>
            <person name="Bourtzis K."/>
            <person name="Andersson S.G."/>
        </authorList>
    </citation>
    <scope>NUCLEOTIDE SEQUENCE [LARGE SCALE GENOMIC DNA]</scope>
    <source>
        <strain>wRi</strain>
    </source>
</reference>
<comment type="function">
    <text evidence="1">Catalyzes the reversible conversion of 2-phosphoglycerate (2-PG) into phosphoenolpyruvate (PEP). It is essential for the degradation of carbohydrates via glycolysis.</text>
</comment>
<comment type="catalytic activity">
    <reaction evidence="1">
        <text>(2R)-2-phosphoglycerate = phosphoenolpyruvate + H2O</text>
        <dbReference type="Rhea" id="RHEA:10164"/>
        <dbReference type="ChEBI" id="CHEBI:15377"/>
        <dbReference type="ChEBI" id="CHEBI:58289"/>
        <dbReference type="ChEBI" id="CHEBI:58702"/>
        <dbReference type="EC" id="4.2.1.11"/>
    </reaction>
</comment>
<comment type="cofactor">
    <cofactor evidence="1">
        <name>Mg(2+)</name>
        <dbReference type="ChEBI" id="CHEBI:18420"/>
    </cofactor>
    <text evidence="1">Binds a second Mg(2+) ion via substrate during catalysis.</text>
</comment>
<comment type="pathway">
    <text evidence="1">Carbohydrate degradation; glycolysis; pyruvate from D-glyceraldehyde 3-phosphate: step 4/5.</text>
</comment>
<comment type="subcellular location">
    <subcellularLocation>
        <location evidence="1">Cytoplasm</location>
    </subcellularLocation>
    <subcellularLocation>
        <location evidence="1">Secreted</location>
    </subcellularLocation>
    <subcellularLocation>
        <location evidence="1">Cell surface</location>
    </subcellularLocation>
    <text evidence="1">Fractions of enolase are present in both the cytoplasm and on the cell surface.</text>
</comment>
<comment type="similarity">
    <text evidence="1">Belongs to the enolase family.</text>
</comment>
<dbReference type="EC" id="4.2.1.11" evidence="1"/>
<dbReference type="EMBL" id="CP001391">
    <property type="protein sequence ID" value="ACN95076.1"/>
    <property type="molecule type" value="Genomic_DNA"/>
</dbReference>
<dbReference type="RefSeq" id="WP_012673107.1">
    <property type="nucleotide sequence ID" value="NZ_MKIF01000149.1"/>
</dbReference>
<dbReference type="SMR" id="C0R5N4"/>
<dbReference type="STRING" id="66084.WRi_002510"/>
<dbReference type="KEGG" id="wri:WRi_002510"/>
<dbReference type="HOGENOM" id="CLU_031223_2_1_5"/>
<dbReference type="UniPathway" id="UPA00109">
    <property type="reaction ID" value="UER00187"/>
</dbReference>
<dbReference type="Proteomes" id="UP000001293">
    <property type="component" value="Chromosome"/>
</dbReference>
<dbReference type="GO" id="GO:0009986">
    <property type="term" value="C:cell surface"/>
    <property type="evidence" value="ECO:0007669"/>
    <property type="project" value="UniProtKB-SubCell"/>
</dbReference>
<dbReference type="GO" id="GO:0005576">
    <property type="term" value="C:extracellular region"/>
    <property type="evidence" value="ECO:0007669"/>
    <property type="project" value="UniProtKB-SubCell"/>
</dbReference>
<dbReference type="GO" id="GO:0000015">
    <property type="term" value="C:phosphopyruvate hydratase complex"/>
    <property type="evidence" value="ECO:0007669"/>
    <property type="project" value="InterPro"/>
</dbReference>
<dbReference type="GO" id="GO:0000287">
    <property type="term" value="F:magnesium ion binding"/>
    <property type="evidence" value="ECO:0007669"/>
    <property type="project" value="UniProtKB-UniRule"/>
</dbReference>
<dbReference type="GO" id="GO:0004634">
    <property type="term" value="F:phosphopyruvate hydratase activity"/>
    <property type="evidence" value="ECO:0007669"/>
    <property type="project" value="UniProtKB-UniRule"/>
</dbReference>
<dbReference type="GO" id="GO:0006096">
    <property type="term" value="P:glycolytic process"/>
    <property type="evidence" value="ECO:0007669"/>
    <property type="project" value="UniProtKB-UniRule"/>
</dbReference>
<dbReference type="CDD" id="cd03313">
    <property type="entry name" value="enolase"/>
    <property type="match status" value="1"/>
</dbReference>
<dbReference type="FunFam" id="3.30.390.10:FF:000001">
    <property type="entry name" value="Enolase"/>
    <property type="match status" value="1"/>
</dbReference>
<dbReference type="Gene3D" id="3.20.20.120">
    <property type="entry name" value="Enolase-like C-terminal domain"/>
    <property type="match status" value="1"/>
</dbReference>
<dbReference type="Gene3D" id="3.30.390.10">
    <property type="entry name" value="Enolase-like, N-terminal domain"/>
    <property type="match status" value="1"/>
</dbReference>
<dbReference type="HAMAP" id="MF_00318">
    <property type="entry name" value="Enolase"/>
    <property type="match status" value="1"/>
</dbReference>
<dbReference type="InterPro" id="IPR000941">
    <property type="entry name" value="Enolase"/>
</dbReference>
<dbReference type="InterPro" id="IPR036849">
    <property type="entry name" value="Enolase-like_C_sf"/>
</dbReference>
<dbReference type="InterPro" id="IPR029017">
    <property type="entry name" value="Enolase-like_N"/>
</dbReference>
<dbReference type="InterPro" id="IPR020810">
    <property type="entry name" value="Enolase_C"/>
</dbReference>
<dbReference type="InterPro" id="IPR020809">
    <property type="entry name" value="Enolase_CS"/>
</dbReference>
<dbReference type="InterPro" id="IPR020811">
    <property type="entry name" value="Enolase_N"/>
</dbReference>
<dbReference type="NCBIfam" id="TIGR01060">
    <property type="entry name" value="eno"/>
    <property type="match status" value="1"/>
</dbReference>
<dbReference type="PANTHER" id="PTHR11902">
    <property type="entry name" value="ENOLASE"/>
    <property type="match status" value="1"/>
</dbReference>
<dbReference type="PANTHER" id="PTHR11902:SF1">
    <property type="entry name" value="ENOLASE"/>
    <property type="match status" value="1"/>
</dbReference>
<dbReference type="Pfam" id="PF00113">
    <property type="entry name" value="Enolase_C"/>
    <property type="match status" value="1"/>
</dbReference>
<dbReference type="Pfam" id="PF03952">
    <property type="entry name" value="Enolase_N"/>
    <property type="match status" value="1"/>
</dbReference>
<dbReference type="PIRSF" id="PIRSF001400">
    <property type="entry name" value="Enolase"/>
    <property type="match status" value="1"/>
</dbReference>
<dbReference type="PRINTS" id="PR00148">
    <property type="entry name" value="ENOLASE"/>
</dbReference>
<dbReference type="SFLD" id="SFLDS00001">
    <property type="entry name" value="Enolase"/>
    <property type="match status" value="1"/>
</dbReference>
<dbReference type="SFLD" id="SFLDF00002">
    <property type="entry name" value="enolase"/>
    <property type="match status" value="1"/>
</dbReference>
<dbReference type="SMART" id="SM01192">
    <property type="entry name" value="Enolase_C"/>
    <property type="match status" value="1"/>
</dbReference>
<dbReference type="SMART" id="SM01193">
    <property type="entry name" value="Enolase_N"/>
    <property type="match status" value="1"/>
</dbReference>
<dbReference type="SUPFAM" id="SSF51604">
    <property type="entry name" value="Enolase C-terminal domain-like"/>
    <property type="match status" value="1"/>
</dbReference>
<dbReference type="SUPFAM" id="SSF54826">
    <property type="entry name" value="Enolase N-terminal domain-like"/>
    <property type="match status" value="1"/>
</dbReference>
<dbReference type="PROSITE" id="PS00164">
    <property type="entry name" value="ENOLASE"/>
    <property type="match status" value="1"/>
</dbReference>
<proteinExistence type="inferred from homology"/>